<sequence length="120" mass="13846">MNTYSITLPWPPSNNRYYRHNRGRTHVSAEGQAYRDNVARIIKNAMLDIGLAMPVKIRIECHMPDRRRRDLDNLQKAAFDALTKAGFWLDDAQVVDYRVVKMPVTKGGRLELTITEMGNE</sequence>
<accession>P0AG74</accession>
<accession>P40116</accession>
<accession>Q2MBN1</accession>
<protein>
    <recommendedName>
        <fullName>Crossover junction endodeoxyribonuclease RusA</fullName>
        <ecNumber>3.1.21.10</ecNumber>
    </recommendedName>
    <alternativeName>
        <fullName>Holliday junction nuclease RusA</fullName>
    </alternativeName>
    <alternativeName>
        <fullName>Holliday junction resolvase</fullName>
    </alternativeName>
</protein>
<gene>
    <name type="primary">rusA</name>
    <name type="synonym">rus</name>
    <name type="synonym">ybcP</name>
    <name type="ordered locus">b0550</name>
    <name type="ordered locus">JW0538</name>
</gene>
<evidence type="ECO:0000269" key="1">
    <source>
    </source>
</evidence>
<evidence type="ECO:0000269" key="2">
    <source>
    </source>
</evidence>
<evidence type="ECO:0000269" key="3">
    <source>
    </source>
</evidence>
<evidence type="ECO:0000269" key="4">
    <source>
    </source>
</evidence>
<evidence type="ECO:0000269" key="5">
    <source>
    </source>
</evidence>
<evidence type="ECO:0000269" key="6">
    <source>
    </source>
</evidence>
<evidence type="ECO:0000305" key="7"/>
<evidence type="ECO:0007829" key="8">
    <source>
        <dbReference type="PDB" id="2H8E"/>
    </source>
</evidence>
<reference key="1">
    <citation type="journal article" date="1996" name="J. Mol. Biol.">
        <title>Holliday junction resolvases encoded by homologous rusA genes in Escherichia coli K-12 and phage 82.</title>
        <authorList>
            <person name="Mahdi A.A."/>
            <person name="Sharples G.J."/>
            <person name="Mandal T.N."/>
            <person name="Lloyd R.G."/>
        </authorList>
    </citation>
    <scope>NUCLEOTIDE SEQUENCE [GENOMIC DNA]</scope>
    <source>
        <strain>K12</strain>
    </source>
</reference>
<reference key="2">
    <citation type="submission" date="1997-01" db="EMBL/GenBank/DDBJ databases">
        <title>Sequence of minutes 4-25 of Escherichia coli.</title>
        <authorList>
            <person name="Chung E."/>
            <person name="Allen E."/>
            <person name="Araujo R."/>
            <person name="Aparicio A.M."/>
            <person name="Davis K."/>
            <person name="Duncan M."/>
            <person name="Federspiel N."/>
            <person name="Hyman R."/>
            <person name="Kalman S."/>
            <person name="Komp C."/>
            <person name="Kurdi O."/>
            <person name="Lew H."/>
            <person name="Lin D."/>
            <person name="Namath A."/>
            <person name="Oefner P."/>
            <person name="Roberts D."/>
            <person name="Schramm S."/>
            <person name="Davis R.W."/>
        </authorList>
    </citation>
    <scope>NUCLEOTIDE SEQUENCE [LARGE SCALE GENOMIC DNA]</scope>
    <source>
        <strain>K12 / MG1655 / ATCC 47076</strain>
    </source>
</reference>
<reference key="3">
    <citation type="journal article" date="1997" name="Science">
        <title>The complete genome sequence of Escherichia coli K-12.</title>
        <authorList>
            <person name="Blattner F.R."/>
            <person name="Plunkett G. III"/>
            <person name="Bloch C.A."/>
            <person name="Perna N.T."/>
            <person name="Burland V."/>
            <person name="Riley M."/>
            <person name="Collado-Vides J."/>
            <person name="Glasner J.D."/>
            <person name="Rode C.K."/>
            <person name="Mayhew G.F."/>
            <person name="Gregor J."/>
            <person name="Davis N.W."/>
            <person name="Kirkpatrick H.A."/>
            <person name="Goeden M.A."/>
            <person name="Rose D.J."/>
            <person name="Mau B."/>
            <person name="Shao Y."/>
        </authorList>
    </citation>
    <scope>NUCLEOTIDE SEQUENCE [LARGE SCALE GENOMIC DNA]</scope>
    <source>
        <strain>K12 / MG1655 / ATCC 47076</strain>
    </source>
</reference>
<reference key="4">
    <citation type="journal article" date="2006" name="Mol. Syst. Biol.">
        <title>Highly accurate genome sequences of Escherichia coli K-12 strains MG1655 and W3110.</title>
        <authorList>
            <person name="Hayashi K."/>
            <person name="Morooka N."/>
            <person name="Yamamoto Y."/>
            <person name="Fujita K."/>
            <person name="Isono K."/>
            <person name="Choi S."/>
            <person name="Ohtsubo E."/>
            <person name="Baba T."/>
            <person name="Wanner B.L."/>
            <person name="Mori H."/>
            <person name="Horiuchi T."/>
        </authorList>
    </citation>
    <scope>NUCLEOTIDE SEQUENCE [LARGE SCALE GENOMIC DNA]</scope>
    <source>
        <strain>K12 / W3110 / ATCC 27325 / DSM 5911</strain>
    </source>
</reference>
<reference key="5">
    <citation type="journal article" date="1994" name="EMBO J.">
        <title>Processing of intermediates in recombination and DNA repair: identification of a new endonuclease that specifically cleaves Holliday junctions.</title>
        <authorList>
            <person name="Sharples G.J."/>
            <person name="Chan S.N."/>
            <person name="Mahdi A.A."/>
            <person name="Whitby M.C."/>
            <person name="Lloyd R.G."/>
        </authorList>
    </citation>
    <scope>PROTEIN SEQUENCE OF 1-9</scope>
    <scope>CHARACTERIZATION</scope>
</reference>
<reference key="6">
    <citation type="journal article" date="1997" name="J. Biol. Chem.">
        <title>Sequence specificity and biochemical characterization of the RusA Holliday junction resolvase of Escherichia coli.</title>
        <authorList>
            <person name="Chan S.N."/>
            <person name="Harris L."/>
            <person name="Bolt E.L."/>
            <person name="Whitby M.C."/>
            <person name="Lloyd R.G."/>
        </authorList>
    </citation>
    <scope>CHARACTERIZATION</scope>
    <scope>SUBUNIT</scope>
</reference>
<reference key="7">
    <citation type="journal article" date="1998" name="J. Mol. Biol.">
        <title>Structural recognition and distortion by the DNA junction-resolving enzyme RusA.</title>
        <authorList>
            <person name="Giraud-Panis M.-J.E."/>
            <person name="Lilley D.M.J."/>
        </authorList>
    </citation>
    <scope>CLEAVAGE SPECIFICITY</scope>
    <scope>DNA-BINDING</scope>
    <scope>MUTAGENESIS OF ASP-70</scope>
</reference>
<reference key="8">
    <citation type="journal article" date="1999" name="J. Mol. Biol.">
        <title>Identification of three aspartic acid residues essential for catalysis by the RusA holliday junction resolvase.</title>
        <authorList>
            <person name="Bolt E.L."/>
            <person name="Sharples G.J."/>
            <person name="Lloyd R.G."/>
        </authorList>
    </citation>
    <scope>MUTAGENESIS OF ASP-70; ASP-72; ASP-80; ASP-90; ASP-91; GLU-111 AND GLU-116</scope>
</reference>
<reference key="9">
    <citation type="journal article" date="2000" name="J. Mol. Biol.">
        <title>Analysis of conserved basic residues associated with DNA binding (Arg69) and catalysis (Lys76) by the RusA holliday junction resolvase.</title>
        <authorList>
            <person name="Bolt E.L."/>
            <person name="Sharples G.J."/>
            <person name="Lloyd R.G."/>
        </authorList>
    </citation>
    <scope>MUTAGENESIS OF ARG-16; TYR-17; ARG-19; ARG-58; ARG-68; ARG-69; ASN-73; LYS-76; PHE-87 AND LYS-101</scope>
</reference>
<reference key="10">
    <citation type="journal article" date="2003" name="Structure">
        <title>The structure of Escherichia coli RusA endonuclease reveals a new Holliday junction DNA binding fold.</title>
        <authorList>
            <person name="Rafferty J.B."/>
            <person name="Bolt E.L."/>
            <person name="Muranova T.A."/>
            <person name="Sedelnikova S.E."/>
            <person name="Leonard P."/>
            <person name="Pasquo A."/>
            <person name="Baker P.J."/>
            <person name="Rice D.W."/>
            <person name="Sharples G.J."/>
            <person name="Lloyd R.G."/>
        </authorList>
    </citation>
    <scope>X-RAY CRYSTALLOGRAPHY (1.9 ANGSTROMS)</scope>
    <scope>SUBUNIT</scope>
</reference>
<reference key="11">
    <citation type="journal article" date="2006" name="Nucleic Acids Res.">
        <title>RusA Holliday junction resolvase: DNA complex structure -- insights into selectivity and specificity.</title>
        <authorList>
            <person name="Macmaster R."/>
            <person name="Sedelnikova S."/>
            <person name="Baker P.J."/>
            <person name="Bolt E.L."/>
            <person name="Lloyd R.G."/>
            <person name="Rafferty J.B."/>
        </authorList>
    </citation>
    <scope>X-RAY CRYSTALLOGRAPHY (1.2 ANGSTROMS) OF MUTANT ASN-70 IN COMPLEX WITH DNA</scope>
    <scope>SUBUNIT</scope>
</reference>
<name>RUSA_ECOLI</name>
<proteinExistence type="evidence at protein level"/>
<keyword id="KW-0002">3D-structure</keyword>
<keyword id="KW-0903">Direct protein sequencing</keyword>
<keyword id="KW-0227">DNA damage</keyword>
<keyword id="KW-0233">DNA recombination</keyword>
<keyword id="KW-0234">DNA repair</keyword>
<keyword id="KW-0255">Endonuclease</keyword>
<keyword id="KW-0378">Hydrolase</keyword>
<keyword id="KW-0460">Magnesium</keyword>
<keyword id="KW-0479">Metal-binding</keyword>
<keyword id="KW-0540">Nuclease</keyword>
<keyword id="KW-1185">Reference proteome</keyword>
<organism>
    <name type="scientific">Escherichia coli (strain K12)</name>
    <dbReference type="NCBI Taxonomy" id="83333"/>
    <lineage>
        <taxon>Bacteria</taxon>
        <taxon>Pseudomonadati</taxon>
        <taxon>Pseudomonadota</taxon>
        <taxon>Gammaproteobacteria</taxon>
        <taxon>Enterobacterales</taxon>
        <taxon>Enterobacteriaceae</taxon>
        <taxon>Escherichia</taxon>
    </lineage>
</organism>
<feature type="chain" id="PRO_0000192004" description="Crossover junction endodeoxyribonuclease RusA">
    <location>
        <begin position="1"/>
        <end position="120"/>
    </location>
</feature>
<feature type="region of interest" description="DNA-binding">
    <location>
        <begin position="13"/>
        <end position="16"/>
    </location>
</feature>
<feature type="region of interest" description="DNA-binding">
    <location>
        <begin position="66"/>
        <end position="73"/>
    </location>
</feature>
<feature type="binding site" evidence="7">
    <location>
        <position position="70"/>
    </location>
    <ligand>
        <name>Mg(2+)</name>
        <dbReference type="ChEBI" id="CHEBI:18420"/>
    </ligand>
</feature>
<feature type="binding site" evidence="7">
    <location>
        <position position="72"/>
    </location>
    <ligand>
        <name>Mg(2+)</name>
        <dbReference type="ChEBI" id="CHEBI:18420"/>
    </ligand>
</feature>
<feature type="binding site" evidence="7">
    <location>
        <position position="91"/>
    </location>
    <ligand>
        <name>Mg(2+)</name>
        <dbReference type="ChEBI" id="CHEBI:18420"/>
    </ligand>
</feature>
<feature type="mutagenesis site" description="No effect on ability to promote DNA repair." evidence="1">
    <original>R</original>
    <variation>Q</variation>
    <location>
        <position position="16"/>
    </location>
</feature>
<feature type="mutagenesis site" description="No effect on ability to promote DNA repair." evidence="1">
    <original>Y</original>
    <variation>L</variation>
    <location>
        <position position="17"/>
    </location>
</feature>
<feature type="mutagenesis site" description="No effect on ability to promote DNA repair." evidence="1">
    <original>R</original>
    <variation>Q</variation>
    <location>
        <position position="19"/>
    </location>
</feature>
<feature type="mutagenesis site" description="No effect on ability to promote DNA repair." evidence="1">
    <original>R</original>
    <variation>Q</variation>
    <location>
        <position position="58"/>
    </location>
</feature>
<feature type="mutagenesis site" description="No effect on ability to promote DNA repair." evidence="1">
    <original>R</original>
    <variation>Q</variation>
    <location>
        <position position="68"/>
    </location>
</feature>
<feature type="mutagenesis site" description="Loss of ability to promote DNA repair. Great loss of Holliday junction resolvase activity. No effect on DNA binding." evidence="1">
    <original>R</original>
    <variation>Q</variation>
    <variation>A</variation>
    <location>
        <position position="69"/>
    </location>
</feature>
<feature type="mutagenesis site" description="Reduces junction resolution 80-fold. No effect on DNA binding." evidence="5 6">
    <original>D</original>
    <variation>N</variation>
    <location>
        <position position="70"/>
    </location>
</feature>
<feature type="mutagenesis site" description="Loss of ability to resolve junctions. No effect on DNA binding." evidence="6">
    <original>D</original>
    <variation>N</variation>
    <location>
        <position position="72"/>
    </location>
</feature>
<feature type="mutagenesis site" description="Slight reduction in ability to promote DNA repair. Great reduction in Holliday junction resolution activity." evidence="1">
    <original>N</original>
    <variation>A</variation>
    <location>
        <position position="73"/>
    </location>
</feature>
<feature type="mutagenesis site" description="Loss of ability to promote DNA repair. Loss of Holliday junction resolvase activity. No effect on DNA binding." evidence="1">
    <original>K</original>
    <variation>Q</variation>
    <location>
        <position position="76"/>
    </location>
</feature>
<feature type="mutagenesis site" description="Loss of ability to promote DNA repair. Less than 2% activity of Holliday junction resolvase. No effect on DNA binding." evidence="1">
    <original>K</original>
    <variation>R</variation>
    <location>
        <position position="76"/>
    </location>
</feature>
<feature type="mutagenesis site" description="Slight reduction in ability to resolve junctions. No effect on DNA binding." evidence="6">
    <original>D</original>
    <variation>N</variation>
    <location>
        <position position="80"/>
    </location>
</feature>
<feature type="mutagenesis site" description="No effect on ability to promote DNA repair." evidence="1">
    <original>F</original>
    <variation>Y</variation>
    <variation>V</variation>
    <location>
        <position position="87"/>
    </location>
</feature>
<feature type="mutagenesis site" description="Slight reduction in ability to resolve junctions. No effect on DNA binding." evidence="6">
    <original>D</original>
    <variation>N</variation>
    <location>
        <position position="90"/>
    </location>
</feature>
<feature type="mutagenesis site" description="Loss of ability to resolve junctions. No effect on DNA binding." evidence="6">
    <original>D</original>
    <variation>N</variation>
    <location>
        <position position="91"/>
    </location>
</feature>
<feature type="mutagenesis site" description="No effect on ability to promote DNA repair." evidence="1">
    <original>K</original>
    <variation>Q</variation>
    <location>
        <position position="101"/>
    </location>
</feature>
<feature type="mutagenesis site" description="No effect on resolvase activity or DNA binding." evidence="6">
    <original>E</original>
    <variation>Q</variation>
    <location>
        <position position="111"/>
    </location>
</feature>
<feature type="mutagenesis site" description="No effect on resolvase activity or DNA binding." evidence="6">
    <original>E</original>
    <variation>Q</variation>
    <location>
        <position position="116"/>
    </location>
</feature>
<feature type="strand" evidence="8">
    <location>
        <begin position="3"/>
        <end position="9"/>
    </location>
</feature>
<feature type="helix" evidence="8">
    <location>
        <begin position="14"/>
        <end position="17"/>
    </location>
</feature>
<feature type="strand" evidence="8">
    <location>
        <begin position="18"/>
        <end position="23"/>
    </location>
</feature>
<feature type="strand" evidence="8">
    <location>
        <begin position="25"/>
        <end position="27"/>
    </location>
</feature>
<feature type="helix" evidence="8">
    <location>
        <begin position="29"/>
        <end position="44"/>
    </location>
</feature>
<feature type="strand" evidence="8">
    <location>
        <begin position="55"/>
        <end position="62"/>
    </location>
</feature>
<feature type="strand" evidence="8">
    <location>
        <begin position="64"/>
        <end position="67"/>
    </location>
</feature>
<feature type="helix" evidence="8">
    <location>
        <begin position="72"/>
        <end position="84"/>
    </location>
</feature>
<feature type="strand" evidence="8">
    <location>
        <begin position="87"/>
        <end position="89"/>
    </location>
</feature>
<feature type="helix" evidence="8">
    <location>
        <begin position="91"/>
        <end position="93"/>
    </location>
</feature>
<feature type="strand" evidence="8">
    <location>
        <begin position="94"/>
        <end position="102"/>
    </location>
</feature>
<feature type="strand" evidence="8">
    <location>
        <begin position="109"/>
        <end position="116"/>
    </location>
</feature>
<comment type="function">
    <text>Endonuclease that resolves Holliday junction intermediates made during homologous genetic recombination and DNA repair. Exhibits sequence and structure-selective cleavage of four-way DNA junctions, where it introduces symmetrical nicks in two strands of the same polarity at the 5' side of CC dinucleotides. Corrects the defects in genetic recombination and DNA repair associated with inactivation of ruvAB or ruvC.</text>
</comment>
<comment type="catalytic activity">
    <reaction>
        <text>Endonucleolytic cleavage at a junction such as a reciprocal single-stranded crossover between two homologous DNA duplexes (Holliday junction).</text>
        <dbReference type="EC" id="3.1.21.10"/>
    </reaction>
</comment>
<comment type="cofactor">
    <cofactor evidence="7">
        <name>Mg(2+)</name>
        <dbReference type="ChEBI" id="CHEBI:18420"/>
    </cofactor>
    <text evidence="7">Binds 1 Mg(2+) ion per subunit.</text>
</comment>
<comment type="subunit">
    <text evidence="2 3 4">Homodimer.</text>
</comment>
<comment type="miscellaneous">
    <text>Encoded by the cryptic lambdoid prophage DLP12. Normally not expressed. Complete suppression of ruv mutations by RusA is dependent on the activity of RecG.</text>
</comment>
<comment type="similarity">
    <text evidence="7">Belongs to the RusA family.</text>
</comment>
<dbReference type="EC" id="3.1.21.10"/>
<dbReference type="EMBL" id="X92587">
    <property type="protein sequence ID" value="CAA63321.1"/>
    <property type="molecule type" value="Genomic_DNA"/>
</dbReference>
<dbReference type="EMBL" id="U82598">
    <property type="protein sequence ID" value="AAB40746.1"/>
    <property type="molecule type" value="Genomic_DNA"/>
</dbReference>
<dbReference type="EMBL" id="U00096">
    <property type="protein sequence ID" value="AAC73651.1"/>
    <property type="molecule type" value="Genomic_DNA"/>
</dbReference>
<dbReference type="EMBL" id="AP009048">
    <property type="protein sequence ID" value="BAE76325.1"/>
    <property type="molecule type" value="Genomic_DNA"/>
</dbReference>
<dbReference type="PIR" id="S66590">
    <property type="entry name" value="S66590"/>
</dbReference>
<dbReference type="RefSeq" id="NP_415082.1">
    <property type="nucleotide sequence ID" value="NC_000913.3"/>
</dbReference>
<dbReference type="RefSeq" id="WP_001099712.1">
    <property type="nucleotide sequence ID" value="NZ_LN832404.1"/>
</dbReference>
<dbReference type="PDB" id="1Q8R">
    <property type="method" value="X-ray"/>
    <property type="resolution" value="1.90 A"/>
    <property type="chains" value="A/B=1-120"/>
</dbReference>
<dbReference type="PDB" id="2H8C">
    <property type="method" value="X-ray"/>
    <property type="resolution" value="3.10 A"/>
    <property type="chains" value="A/B/C/D=1-120"/>
</dbReference>
<dbReference type="PDB" id="2H8E">
    <property type="method" value="X-ray"/>
    <property type="resolution" value="1.20 A"/>
    <property type="chains" value="A=1-120"/>
</dbReference>
<dbReference type="PDBsum" id="1Q8R"/>
<dbReference type="PDBsum" id="2H8C"/>
<dbReference type="PDBsum" id="2H8E"/>
<dbReference type="SMR" id="P0AG74"/>
<dbReference type="BioGRID" id="4261529">
    <property type="interactions" value="61"/>
</dbReference>
<dbReference type="BioGRID" id="849560">
    <property type="interactions" value="4"/>
</dbReference>
<dbReference type="DIP" id="DIP-16988N"/>
<dbReference type="FunCoup" id="P0AG74">
    <property type="interactions" value="99"/>
</dbReference>
<dbReference type="IntAct" id="P0AG74">
    <property type="interactions" value="1"/>
</dbReference>
<dbReference type="STRING" id="511145.b0550"/>
<dbReference type="PaxDb" id="511145-b0550"/>
<dbReference type="EnsemblBacteria" id="AAC73651">
    <property type="protein sequence ID" value="AAC73651"/>
    <property type="gene ID" value="b0550"/>
</dbReference>
<dbReference type="GeneID" id="945174"/>
<dbReference type="KEGG" id="ecj:JW0538"/>
<dbReference type="KEGG" id="eco:b0550"/>
<dbReference type="KEGG" id="ecoc:C3026_02710"/>
<dbReference type="PATRIC" id="fig|1411691.4.peg.1727"/>
<dbReference type="EchoBASE" id="EB4170"/>
<dbReference type="eggNOG" id="COG4570">
    <property type="taxonomic scope" value="Bacteria"/>
</dbReference>
<dbReference type="HOGENOM" id="CLU_139466_0_2_6"/>
<dbReference type="InParanoid" id="P0AG74"/>
<dbReference type="OMA" id="SRGIHYI"/>
<dbReference type="OrthoDB" id="73971at2"/>
<dbReference type="PhylomeDB" id="P0AG74"/>
<dbReference type="BioCyc" id="EcoCyc:G6306-MONOMER"/>
<dbReference type="BRENDA" id="3.1.21.10">
    <property type="organism ID" value="2026"/>
</dbReference>
<dbReference type="EvolutionaryTrace" id="P0AG74"/>
<dbReference type="PRO" id="PR:P0AG74"/>
<dbReference type="Proteomes" id="UP000000625">
    <property type="component" value="Chromosome"/>
</dbReference>
<dbReference type="GO" id="GO:0008821">
    <property type="term" value="F:crossover junction DNA endonuclease activity"/>
    <property type="evidence" value="ECO:0000314"/>
    <property type="project" value="EcoCyc"/>
</dbReference>
<dbReference type="GO" id="GO:0000400">
    <property type="term" value="F:four-way junction DNA binding"/>
    <property type="evidence" value="ECO:0000314"/>
    <property type="project" value="EcoCyc"/>
</dbReference>
<dbReference type="GO" id="GO:0000287">
    <property type="term" value="F:magnesium ion binding"/>
    <property type="evidence" value="ECO:0007669"/>
    <property type="project" value="InterPro"/>
</dbReference>
<dbReference type="GO" id="GO:0042803">
    <property type="term" value="F:protein homodimerization activity"/>
    <property type="evidence" value="ECO:0000314"/>
    <property type="project" value="EcoCyc"/>
</dbReference>
<dbReference type="GO" id="GO:0006310">
    <property type="term" value="P:DNA recombination"/>
    <property type="evidence" value="ECO:0007669"/>
    <property type="project" value="UniProtKB-KW"/>
</dbReference>
<dbReference type="GO" id="GO:0006281">
    <property type="term" value="P:DNA repair"/>
    <property type="evidence" value="ECO:0007669"/>
    <property type="project" value="UniProtKB-KW"/>
</dbReference>
<dbReference type="FunFam" id="3.30.1330.70:FF:000001">
    <property type="entry name" value="Crossover junction endodeoxyribonuclease RusA"/>
    <property type="match status" value="1"/>
</dbReference>
<dbReference type="Gene3D" id="3.30.1330.70">
    <property type="entry name" value="Holliday junction resolvase RusA"/>
    <property type="match status" value="1"/>
</dbReference>
<dbReference type="InterPro" id="IPR016281">
    <property type="entry name" value="Endonuclease_RusA"/>
</dbReference>
<dbReference type="InterPro" id="IPR008822">
    <property type="entry name" value="Endonuclease_RusA-like"/>
</dbReference>
<dbReference type="InterPro" id="IPR036614">
    <property type="entry name" value="RusA-like_sf"/>
</dbReference>
<dbReference type="NCBIfam" id="NF007305">
    <property type="entry name" value="PRK09786.1"/>
    <property type="match status" value="1"/>
</dbReference>
<dbReference type="Pfam" id="PF05866">
    <property type="entry name" value="RusA"/>
    <property type="match status" value="1"/>
</dbReference>
<dbReference type="PIRSF" id="PIRSF001007">
    <property type="entry name" value="RusA"/>
    <property type="match status" value="1"/>
</dbReference>
<dbReference type="SUPFAM" id="SSF103084">
    <property type="entry name" value="Holliday junction resolvase RusA"/>
    <property type="match status" value="1"/>
</dbReference>